<feature type="chain" id="PRO_0000378215" description="Putative cysteine ligase BshC">
    <location>
        <begin position="1"/>
        <end position="538"/>
    </location>
</feature>
<feature type="coiled-coil region" evidence="1">
    <location>
        <begin position="460"/>
        <end position="484"/>
    </location>
</feature>
<evidence type="ECO:0000255" key="1">
    <source>
        <dbReference type="HAMAP-Rule" id="MF_01867"/>
    </source>
</evidence>
<proteinExistence type="inferred from homology"/>
<dbReference type="EC" id="6.-.-.-" evidence="1"/>
<dbReference type="EMBL" id="CP000001">
    <property type="protein sequence ID" value="AAU16588.1"/>
    <property type="molecule type" value="Genomic_DNA"/>
</dbReference>
<dbReference type="RefSeq" id="WP_000403063.1">
    <property type="nucleotide sequence ID" value="NC_006274.1"/>
</dbReference>
<dbReference type="SMR" id="Q636A7"/>
<dbReference type="KEGG" id="bcz:BCE33L3678"/>
<dbReference type="PATRIC" id="fig|288681.22.peg.1733"/>
<dbReference type="Proteomes" id="UP000002612">
    <property type="component" value="Chromosome"/>
</dbReference>
<dbReference type="GO" id="GO:0016874">
    <property type="term" value="F:ligase activity"/>
    <property type="evidence" value="ECO:0007669"/>
    <property type="project" value="UniProtKB-UniRule"/>
</dbReference>
<dbReference type="HAMAP" id="MF_01867">
    <property type="entry name" value="BshC"/>
    <property type="match status" value="1"/>
</dbReference>
<dbReference type="InterPro" id="IPR011199">
    <property type="entry name" value="Bacillithiol_biosynth_BshC"/>
</dbReference>
<dbReference type="InterPro" id="IPR055399">
    <property type="entry name" value="CC_BshC"/>
</dbReference>
<dbReference type="InterPro" id="IPR055398">
    <property type="entry name" value="Rossmann-like_BshC"/>
</dbReference>
<dbReference type="NCBIfam" id="TIGR03998">
    <property type="entry name" value="thiol_BshC"/>
    <property type="match status" value="1"/>
</dbReference>
<dbReference type="Pfam" id="PF24850">
    <property type="entry name" value="CC_BshC"/>
    <property type="match status" value="1"/>
</dbReference>
<dbReference type="Pfam" id="PF10079">
    <property type="entry name" value="Rossmann-like_BshC"/>
    <property type="match status" value="1"/>
</dbReference>
<dbReference type="PIRSF" id="PIRSF012535">
    <property type="entry name" value="UCP012535"/>
    <property type="match status" value="1"/>
</dbReference>
<name>BSHC_BACCZ</name>
<keyword id="KW-0175">Coiled coil</keyword>
<keyword id="KW-0436">Ligase</keyword>
<accession>Q636A7</accession>
<sequence>MEIKEISVPQQGVVADYMNGKKEIQSCFDYMLTEDAFKQRVQDLREREFFRQDLVTHLLEYNTKLQAGEATIQNVKALGDENTYVVIAGQQAGLLTGPLYTIHKIISVLQLAKEKEESLGVKVVPVFWIAGEDHDMDEINHTFVTKNKKIKKTIFHDRNPKKASASESELSLEDCRKWIEEIFKTYPETNFTKDVLQFVDDSLRKSNTYVDFFGHLIMKMFVNSGLILVDSHHPELRKLEVPFFKQIVSKYKEVQEGLLNQQEVIKELGYKPIIETKSNAVHIFMEIDNERVLLEDNQGEFVGKDGTYSFSYEELIEEMERSPERFSNNVVTRPLMQEYVFPTLAFIGGPGELAYWSELQQVFHTIGFRMPPVVPRITITYLERDIATDLHDLQLQESDPFLNNVDKLRENWLSNQIEEPIDERFVEAKKEIMNIHTSLQQFVKEIDPGLSAFAGKNEFKINEQIELLERMLKRNVEKKHEVELNKFRRIQFALRPLGAPQERVWNVCYYLNQFGLDFVDHVMEKTFSWNGKHHVIKL</sequence>
<reference key="1">
    <citation type="journal article" date="2006" name="J. Bacteriol.">
        <title>Pathogenomic sequence analysis of Bacillus cereus and Bacillus thuringiensis isolates closely related to Bacillus anthracis.</title>
        <authorList>
            <person name="Han C.S."/>
            <person name="Xie G."/>
            <person name="Challacombe J.F."/>
            <person name="Altherr M.R."/>
            <person name="Bhotika S.S."/>
            <person name="Bruce D."/>
            <person name="Campbell C.S."/>
            <person name="Campbell M.L."/>
            <person name="Chen J."/>
            <person name="Chertkov O."/>
            <person name="Cleland C."/>
            <person name="Dimitrijevic M."/>
            <person name="Doggett N.A."/>
            <person name="Fawcett J.J."/>
            <person name="Glavina T."/>
            <person name="Goodwin L.A."/>
            <person name="Hill K.K."/>
            <person name="Hitchcock P."/>
            <person name="Jackson P.J."/>
            <person name="Keim P."/>
            <person name="Kewalramani A.R."/>
            <person name="Longmire J."/>
            <person name="Lucas S."/>
            <person name="Malfatti S."/>
            <person name="McMurry K."/>
            <person name="Meincke L.J."/>
            <person name="Misra M."/>
            <person name="Moseman B.L."/>
            <person name="Mundt M."/>
            <person name="Munk A.C."/>
            <person name="Okinaka R.T."/>
            <person name="Parson-Quintana B."/>
            <person name="Reilly L.P."/>
            <person name="Richardson P."/>
            <person name="Robinson D.L."/>
            <person name="Rubin E."/>
            <person name="Saunders E."/>
            <person name="Tapia R."/>
            <person name="Tesmer J.G."/>
            <person name="Thayer N."/>
            <person name="Thompson L.S."/>
            <person name="Tice H."/>
            <person name="Ticknor L.O."/>
            <person name="Wills P.L."/>
            <person name="Brettin T.S."/>
            <person name="Gilna P."/>
        </authorList>
    </citation>
    <scope>NUCLEOTIDE SEQUENCE [LARGE SCALE GENOMIC DNA]</scope>
    <source>
        <strain>ZK / E33L</strain>
    </source>
</reference>
<comment type="function">
    <text evidence="1">Involved in bacillithiol (BSH) biosynthesis. May catalyze the last step of the pathway, the addition of cysteine to glucosamine malate (GlcN-Mal) to generate BSH.</text>
</comment>
<comment type="similarity">
    <text evidence="1">Belongs to the BshC family.</text>
</comment>
<organism>
    <name type="scientific">Bacillus cereus (strain ZK / E33L)</name>
    <dbReference type="NCBI Taxonomy" id="288681"/>
    <lineage>
        <taxon>Bacteria</taxon>
        <taxon>Bacillati</taxon>
        <taxon>Bacillota</taxon>
        <taxon>Bacilli</taxon>
        <taxon>Bacillales</taxon>
        <taxon>Bacillaceae</taxon>
        <taxon>Bacillus</taxon>
        <taxon>Bacillus cereus group</taxon>
    </lineage>
</organism>
<gene>
    <name evidence="1" type="primary">bshC</name>
    <name type="ordered locus">BCE33L3678</name>
</gene>
<protein>
    <recommendedName>
        <fullName evidence="1">Putative cysteine ligase BshC</fullName>
        <ecNumber evidence="1">6.-.-.-</ecNumber>
    </recommendedName>
</protein>